<protein>
    <recommendedName>
        <fullName evidence="1">Chaperonin GroEL</fullName>
        <ecNumber evidence="1">5.6.1.7</ecNumber>
    </recommendedName>
    <alternativeName>
        <fullName evidence="1">60 kDa chaperonin</fullName>
    </alternativeName>
    <alternativeName>
        <fullName evidence="1">Chaperonin-60</fullName>
        <shortName evidence="1">Cpn60</shortName>
    </alternativeName>
</protein>
<organism>
    <name type="scientific">Blochmanniella pennsylvanica (strain BPEN)</name>
    <dbReference type="NCBI Taxonomy" id="291272"/>
    <lineage>
        <taxon>Bacteria</taxon>
        <taxon>Pseudomonadati</taxon>
        <taxon>Pseudomonadota</taxon>
        <taxon>Gammaproteobacteria</taxon>
        <taxon>Enterobacterales</taxon>
        <taxon>Enterobacteriaceae</taxon>
        <taxon>ant endosymbionts</taxon>
        <taxon>Candidatus Blochmanniella</taxon>
    </lineage>
</organism>
<evidence type="ECO:0000255" key="1">
    <source>
        <dbReference type="HAMAP-Rule" id="MF_00600"/>
    </source>
</evidence>
<evidence type="ECO:0000256" key="2">
    <source>
        <dbReference type="SAM" id="MobiDB-lite"/>
    </source>
</evidence>
<gene>
    <name evidence="1" type="primary">groEL</name>
    <name evidence="1" type="synonym">groL</name>
    <name type="ordered locus">BPEN_073</name>
</gene>
<feature type="chain" id="PRO_0000256876" description="Chaperonin GroEL">
    <location>
        <begin position="1"/>
        <end position="545"/>
    </location>
</feature>
<feature type="region of interest" description="Disordered" evidence="2">
    <location>
        <begin position="526"/>
        <end position="545"/>
    </location>
</feature>
<feature type="compositionally biased region" description="Gly residues" evidence="2">
    <location>
        <begin position="535"/>
        <end position="545"/>
    </location>
</feature>
<feature type="binding site" evidence="1">
    <location>
        <begin position="30"/>
        <end position="33"/>
    </location>
    <ligand>
        <name>ATP</name>
        <dbReference type="ChEBI" id="CHEBI:30616"/>
    </ligand>
</feature>
<feature type="binding site" evidence="1">
    <location>
        <position position="51"/>
    </location>
    <ligand>
        <name>ATP</name>
        <dbReference type="ChEBI" id="CHEBI:30616"/>
    </ligand>
</feature>
<feature type="binding site" evidence="1">
    <location>
        <begin position="87"/>
        <end position="91"/>
    </location>
    <ligand>
        <name>ATP</name>
        <dbReference type="ChEBI" id="CHEBI:30616"/>
    </ligand>
</feature>
<feature type="binding site" evidence="1">
    <location>
        <position position="415"/>
    </location>
    <ligand>
        <name>ATP</name>
        <dbReference type="ChEBI" id="CHEBI:30616"/>
    </ligand>
</feature>
<feature type="binding site" evidence="1">
    <location>
        <begin position="479"/>
        <end position="481"/>
    </location>
    <ligand>
        <name>ATP</name>
        <dbReference type="ChEBI" id="CHEBI:30616"/>
    </ligand>
</feature>
<feature type="binding site" evidence="1">
    <location>
        <position position="495"/>
    </location>
    <ligand>
        <name>ATP</name>
        <dbReference type="ChEBI" id="CHEBI:30616"/>
    </ligand>
</feature>
<reference key="1">
    <citation type="journal article" date="2005" name="Genome Res.">
        <title>Genome sequence of Blochmannia pennsylvanicus indicates parallel evolutionary trends among bacterial mutualists of insects.</title>
        <authorList>
            <person name="Degnan P.H."/>
            <person name="Lazarus A.B."/>
            <person name="Wernegreen J.J."/>
        </authorList>
    </citation>
    <scope>NUCLEOTIDE SEQUENCE [LARGE SCALE GENOMIC DNA]</scope>
    <source>
        <strain>BPEN</strain>
    </source>
</reference>
<dbReference type="EC" id="5.6.1.7" evidence="1"/>
<dbReference type="EMBL" id="CP000016">
    <property type="protein sequence ID" value="AAZ40717.1"/>
    <property type="molecule type" value="Genomic_DNA"/>
</dbReference>
<dbReference type="RefSeq" id="WP_011282623.1">
    <property type="nucleotide sequence ID" value="NC_007292.1"/>
</dbReference>
<dbReference type="SMR" id="Q493W7"/>
<dbReference type="STRING" id="291272.BPEN_073"/>
<dbReference type="KEGG" id="bpn:BPEN_073"/>
<dbReference type="eggNOG" id="COG0459">
    <property type="taxonomic scope" value="Bacteria"/>
</dbReference>
<dbReference type="HOGENOM" id="CLU_016503_3_0_6"/>
<dbReference type="OrthoDB" id="9766614at2"/>
<dbReference type="Proteomes" id="UP000007794">
    <property type="component" value="Chromosome"/>
</dbReference>
<dbReference type="GO" id="GO:0005737">
    <property type="term" value="C:cytoplasm"/>
    <property type="evidence" value="ECO:0007669"/>
    <property type="project" value="UniProtKB-SubCell"/>
</dbReference>
<dbReference type="GO" id="GO:0005524">
    <property type="term" value="F:ATP binding"/>
    <property type="evidence" value="ECO:0007669"/>
    <property type="project" value="UniProtKB-UniRule"/>
</dbReference>
<dbReference type="GO" id="GO:0140662">
    <property type="term" value="F:ATP-dependent protein folding chaperone"/>
    <property type="evidence" value="ECO:0007669"/>
    <property type="project" value="InterPro"/>
</dbReference>
<dbReference type="GO" id="GO:0016853">
    <property type="term" value="F:isomerase activity"/>
    <property type="evidence" value="ECO:0007669"/>
    <property type="project" value="UniProtKB-KW"/>
</dbReference>
<dbReference type="GO" id="GO:0051082">
    <property type="term" value="F:unfolded protein binding"/>
    <property type="evidence" value="ECO:0007669"/>
    <property type="project" value="UniProtKB-UniRule"/>
</dbReference>
<dbReference type="GO" id="GO:0042026">
    <property type="term" value="P:protein refolding"/>
    <property type="evidence" value="ECO:0007669"/>
    <property type="project" value="UniProtKB-UniRule"/>
</dbReference>
<dbReference type="CDD" id="cd03344">
    <property type="entry name" value="GroEL"/>
    <property type="match status" value="1"/>
</dbReference>
<dbReference type="FunFam" id="1.10.560.10:FF:000001">
    <property type="entry name" value="60 kDa chaperonin"/>
    <property type="match status" value="1"/>
</dbReference>
<dbReference type="FunFam" id="3.50.7.10:FF:000001">
    <property type="entry name" value="60 kDa chaperonin"/>
    <property type="match status" value="1"/>
</dbReference>
<dbReference type="Gene3D" id="3.50.7.10">
    <property type="entry name" value="GroEL"/>
    <property type="match status" value="1"/>
</dbReference>
<dbReference type="Gene3D" id="1.10.560.10">
    <property type="entry name" value="GroEL-like equatorial domain"/>
    <property type="match status" value="1"/>
</dbReference>
<dbReference type="Gene3D" id="3.30.260.10">
    <property type="entry name" value="TCP-1-like chaperonin intermediate domain"/>
    <property type="match status" value="1"/>
</dbReference>
<dbReference type="HAMAP" id="MF_00600">
    <property type="entry name" value="CH60"/>
    <property type="match status" value="1"/>
</dbReference>
<dbReference type="InterPro" id="IPR018370">
    <property type="entry name" value="Chaperonin_Cpn60_CS"/>
</dbReference>
<dbReference type="InterPro" id="IPR001844">
    <property type="entry name" value="Cpn60/GroEL"/>
</dbReference>
<dbReference type="InterPro" id="IPR002423">
    <property type="entry name" value="Cpn60/GroEL/TCP-1"/>
</dbReference>
<dbReference type="InterPro" id="IPR027409">
    <property type="entry name" value="GroEL-like_apical_dom_sf"/>
</dbReference>
<dbReference type="InterPro" id="IPR027413">
    <property type="entry name" value="GROEL-like_equatorial_sf"/>
</dbReference>
<dbReference type="InterPro" id="IPR027410">
    <property type="entry name" value="TCP-1-like_intermed_sf"/>
</dbReference>
<dbReference type="NCBIfam" id="TIGR02348">
    <property type="entry name" value="GroEL"/>
    <property type="match status" value="1"/>
</dbReference>
<dbReference type="NCBIfam" id="NF000592">
    <property type="entry name" value="PRK00013.1"/>
    <property type="match status" value="1"/>
</dbReference>
<dbReference type="NCBIfam" id="NF009487">
    <property type="entry name" value="PRK12849.1"/>
    <property type="match status" value="1"/>
</dbReference>
<dbReference type="NCBIfam" id="NF009488">
    <property type="entry name" value="PRK12850.1"/>
    <property type="match status" value="1"/>
</dbReference>
<dbReference type="NCBIfam" id="NF009489">
    <property type="entry name" value="PRK12851.1"/>
    <property type="match status" value="1"/>
</dbReference>
<dbReference type="PANTHER" id="PTHR45633">
    <property type="entry name" value="60 KDA HEAT SHOCK PROTEIN, MITOCHONDRIAL"/>
    <property type="match status" value="1"/>
</dbReference>
<dbReference type="Pfam" id="PF00118">
    <property type="entry name" value="Cpn60_TCP1"/>
    <property type="match status" value="1"/>
</dbReference>
<dbReference type="PRINTS" id="PR00298">
    <property type="entry name" value="CHAPERONIN60"/>
</dbReference>
<dbReference type="SUPFAM" id="SSF52029">
    <property type="entry name" value="GroEL apical domain-like"/>
    <property type="match status" value="1"/>
</dbReference>
<dbReference type="SUPFAM" id="SSF48592">
    <property type="entry name" value="GroEL equatorial domain-like"/>
    <property type="match status" value="1"/>
</dbReference>
<dbReference type="SUPFAM" id="SSF54849">
    <property type="entry name" value="GroEL-intermediate domain like"/>
    <property type="match status" value="1"/>
</dbReference>
<dbReference type="PROSITE" id="PS00296">
    <property type="entry name" value="CHAPERONINS_CPN60"/>
    <property type="match status" value="1"/>
</dbReference>
<keyword id="KW-0067">ATP-binding</keyword>
<keyword id="KW-0143">Chaperone</keyword>
<keyword id="KW-0963">Cytoplasm</keyword>
<keyword id="KW-0413">Isomerase</keyword>
<keyword id="KW-0547">Nucleotide-binding</keyword>
<keyword id="KW-1185">Reference proteome</keyword>
<sequence>MAAKDVKFGNDARVKMLRGVNVLADAVKVTLGPKGRNVVLDKSFGAPVITKDGVSVAREIELEDKFENMGAQMVKEVASKANDSAGDGTTTATVLAQSIVNEGLKAVAAGMNPMDLKRGIDKAVVAAVEELKKLSVPCSDPKAIAQVGTISANSDETVGKLIAQAMDKVGKEGVITVEEGSGLQDELDVVEGMQFDRGYLSPYFVNKPESGTVELEHPFILLADKKISNIREMLPILESVAKAGKPLLIIAEDVEGEALATLVVNNMRGIVKVTAVKAPGFGDRRKAMLQDIAVLTAGTVISEEIGLELEKATLEDMGQAKRVVITKDATTIIDGVGNKSAINSRVAQINQQRDEATSDYDREKLQERVAKLAGGVAVIKVGAATEVEMKEKKARVEDALHATRAAVEEGVVAGGGVALIRVANAIRNLCGDNEDQNVGIKVARRAMEAPLRQIMANAGEEPSVIANNVRSGEGNTGYNAATEKYGNMIELGILDPTKVTRSALQYAASIAGLMITTECMVTELPKEDKPDLGNAGAGGNMGGMM</sequence>
<accession>Q493W7</accession>
<name>CH60_BLOPB</name>
<proteinExistence type="inferred from homology"/>
<comment type="function">
    <text evidence="1">Together with its co-chaperonin GroES, plays an essential role in assisting protein folding. The GroEL-GroES system forms a nano-cage that allows encapsulation of the non-native substrate proteins and provides a physical environment optimized to promote and accelerate protein folding.</text>
</comment>
<comment type="catalytic activity">
    <reaction evidence="1">
        <text>ATP + H2O + a folded polypeptide = ADP + phosphate + an unfolded polypeptide.</text>
        <dbReference type="EC" id="5.6.1.7"/>
    </reaction>
</comment>
<comment type="subunit">
    <text evidence="1">Forms a cylinder of 14 subunits composed of two heptameric rings stacked back-to-back. Interacts with the co-chaperonin GroES.</text>
</comment>
<comment type="subcellular location">
    <subcellularLocation>
        <location evidence="1">Cytoplasm</location>
    </subcellularLocation>
</comment>
<comment type="similarity">
    <text evidence="1">Belongs to the chaperonin (HSP60) family.</text>
</comment>